<dbReference type="EC" id="6.1.1.11" evidence="1"/>
<dbReference type="EMBL" id="CP000868">
    <property type="protein sequence ID" value="ABX16104.1"/>
    <property type="molecule type" value="Genomic_DNA"/>
</dbReference>
<dbReference type="EMBL" id="AP009385">
    <property type="protein sequence ID" value="BAG42774.1"/>
    <property type="molecule type" value="Genomic_DNA"/>
</dbReference>
<dbReference type="RefSeq" id="WP_006400804.1">
    <property type="nucleotide sequence ID" value="NC_010804.1"/>
</dbReference>
<dbReference type="SMR" id="A9AES3"/>
<dbReference type="STRING" id="395019.BMULJ_00814"/>
<dbReference type="KEGG" id="bmj:BMULJ_00814"/>
<dbReference type="KEGG" id="bmu:Bmul_2419"/>
<dbReference type="eggNOG" id="COG0172">
    <property type="taxonomic scope" value="Bacteria"/>
</dbReference>
<dbReference type="HOGENOM" id="CLU_023797_1_1_4"/>
<dbReference type="UniPathway" id="UPA00906">
    <property type="reaction ID" value="UER00895"/>
</dbReference>
<dbReference type="Proteomes" id="UP000008815">
    <property type="component" value="Chromosome 1"/>
</dbReference>
<dbReference type="GO" id="GO:0005737">
    <property type="term" value="C:cytoplasm"/>
    <property type="evidence" value="ECO:0007669"/>
    <property type="project" value="UniProtKB-SubCell"/>
</dbReference>
<dbReference type="GO" id="GO:0005524">
    <property type="term" value="F:ATP binding"/>
    <property type="evidence" value="ECO:0007669"/>
    <property type="project" value="UniProtKB-UniRule"/>
</dbReference>
<dbReference type="GO" id="GO:0004828">
    <property type="term" value="F:serine-tRNA ligase activity"/>
    <property type="evidence" value="ECO:0007669"/>
    <property type="project" value="UniProtKB-UniRule"/>
</dbReference>
<dbReference type="GO" id="GO:0016260">
    <property type="term" value="P:selenocysteine biosynthetic process"/>
    <property type="evidence" value="ECO:0007669"/>
    <property type="project" value="UniProtKB-UniRule"/>
</dbReference>
<dbReference type="GO" id="GO:0006434">
    <property type="term" value="P:seryl-tRNA aminoacylation"/>
    <property type="evidence" value="ECO:0007669"/>
    <property type="project" value="UniProtKB-UniRule"/>
</dbReference>
<dbReference type="CDD" id="cd00770">
    <property type="entry name" value="SerRS_core"/>
    <property type="match status" value="1"/>
</dbReference>
<dbReference type="Gene3D" id="3.30.930.10">
    <property type="entry name" value="Bira Bifunctional Protein, Domain 2"/>
    <property type="match status" value="1"/>
</dbReference>
<dbReference type="Gene3D" id="1.10.287.40">
    <property type="entry name" value="Serine-tRNA synthetase, tRNA binding domain"/>
    <property type="match status" value="1"/>
</dbReference>
<dbReference type="HAMAP" id="MF_00176">
    <property type="entry name" value="Ser_tRNA_synth_type1"/>
    <property type="match status" value="1"/>
</dbReference>
<dbReference type="InterPro" id="IPR002314">
    <property type="entry name" value="aa-tRNA-synt_IIb"/>
</dbReference>
<dbReference type="InterPro" id="IPR006195">
    <property type="entry name" value="aa-tRNA-synth_II"/>
</dbReference>
<dbReference type="InterPro" id="IPR045864">
    <property type="entry name" value="aa-tRNA-synth_II/BPL/LPL"/>
</dbReference>
<dbReference type="InterPro" id="IPR002317">
    <property type="entry name" value="Ser-tRNA-ligase_type_1"/>
</dbReference>
<dbReference type="InterPro" id="IPR015866">
    <property type="entry name" value="Ser-tRNA-synth_1_N"/>
</dbReference>
<dbReference type="InterPro" id="IPR042103">
    <property type="entry name" value="SerRS_1_N_sf"/>
</dbReference>
<dbReference type="InterPro" id="IPR033729">
    <property type="entry name" value="SerRS_core"/>
</dbReference>
<dbReference type="InterPro" id="IPR010978">
    <property type="entry name" value="tRNA-bd_arm"/>
</dbReference>
<dbReference type="NCBIfam" id="TIGR00414">
    <property type="entry name" value="serS"/>
    <property type="match status" value="1"/>
</dbReference>
<dbReference type="PANTHER" id="PTHR43697:SF1">
    <property type="entry name" value="SERINE--TRNA LIGASE"/>
    <property type="match status" value="1"/>
</dbReference>
<dbReference type="PANTHER" id="PTHR43697">
    <property type="entry name" value="SERYL-TRNA SYNTHETASE"/>
    <property type="match status" value="1"/>
</dbReference>
<dbReference type="Pfam" id="PF02403">
    <property type="entry name" value="Seryl_tRNA_N"/>
    <property type="match status" value="1"/>
</dbReference>
<dbReference type="Pfam" id="PF00587">
    <property type="entry name" value="tRNA-synt_2b"/>
    <property type="match status" value="1"/>
</dbReference>
<dbReference type="PIRSF" id="PIRSF001529">
    <property type="entry name" value="Ser-tRNA-synth_IIa"/>
    <property type="match status" value="1"/>
</dbReference>
<dbReference type="PRINTS" id="PR00981">
    <property type="entry name" value="TRNASYNTHSER"/>
</dbReference>
<dbReference type="SUPFAM" id="SSF55681">
    <property type="entry name" value="Class II aaRS and biotin synthetases"/>
    <property type="match status" value="1"/>
</dbReference>
<dbReference type="SUPFAM" id="SSF46589">
    <property type="entry name" value="tRNA-binding arm"/>
    <property type="match status" value="1"/>
</dbReference>
<dbReference type="PROSITE" id="PS50862">
    <property type="entry name" value="AA_TRNA_LIGASE_II"/>
    <property type="match status" value="1"/>
</dbReference>
<organism>
    <name type="scientific">Burkholderia multivorans (strain ATCC 17616 / 249)</name>
    <dbReference type="NCBI Taxonomy" id="395019"/>
    <lineage>
        <taxon>Bacteria</taxon>
        <taxon>Pseudomonadati</taxon>
        <taxon>Pseudomonadota</taxon>
        <taxon>Betaproteobacteria</taxon>
        <taxon>Burkholderiales</taxon>
        <taxon>Burkholderiaceae</taxon>
        <taxon>Burkholderia</taxon>
        <taxon>Burkholderia cepacia complex</taxon>
    </lineage>
</organism>
<comment type="function">
    <text evidence="1">Catalyzes the attachment of serine to tRNA(Ser). Is also able to aminoacylate tRNA(Sec) with serine, to form the misacylated tRNA L-seryl-tRNA(Sec), which will be further converted into selenocysteinyl-tRNA(Sec).</text>
</comment>
<comment type="catalytic activity">
    <reaction evidence="1">
        <text>tRNA(Ser) + L-serine + ATP = L-seryl-tRNA(Ser) + AMP + diphosphate + H(+)</text>
        <dbReference type="Rhea" id="RHEA:12292"/>
        <dbReference type="Rhea" id="RHEA-COMP:9669"/>
        <dbReference type="Rhea" id="RHEA-COMP:9703"/>
        <dbReference type="ChEBI" id="CHEBI:15378"/>
        <dbReference type="ChEBI" id="CHEBI:30616"/>
        <dbReference type="ChEBI" id="CHEBI:33019"/>
        <dbReference type="ChEBI" id="CHEBI:33384"/>
        <dbReference type="ChEBI" id="CHEBI:78442"/>
        <dbReference type="ChEBI" id="CHEBI:78533"/>
        <dbReference type="ChEBI" id="CHEBI:456215"/>
        <dbReference type="EC" id="6.1.1.11"/>
    </reaction>
</comment>
<comment type="catalytic activity">
    <reaction evidence="1">
        <text>tRNA(Sec) + L-serine + ATP = L-seryl-tRNA(Sec) + AMP + diphosphate + H(+)</text>
        <dbReference type="Rhea" id="RHEA:42580"/>
        <dbReference type="Rhea" id="RHEA-COMP:9742"/>
        <dbReference type="Rhea" id="RHEA-COMP:10128"/>
        <dbReference type="ChEBI" id="CHEBI:15378"/>
        <dbReference type="ChEBI" id="CHEBI:30616"/>
        <dbReference type="ChEBI" id="CHEBI:33019"/>
        <dbReference type="ChEBI" id="CHEBI:33384"/>
        <dbReference type="ChEBI" id="CHEBI:78442"/>
        <dbReference type="ChEBI" id="CHEBI:78533"/>
        <dbReference type="ChEBI" id="CHEBI:456215"/>
        <dbReference type="EC" id="6.1.1.11"/>
    </reaction>
</comment>
<comment type="pathway">
    <text evidence="1">Aminoacyl-tRNA biosynthesis; selenocysteinyl-tRNA(Sec) biosynthesis; L-seryl-tRNA(Sec) from L-serine and tRNA(Sec): step 1/1.</text>
</comment>
<comment type="subunit">
    <text evidence="1">Homodimer. The tRNA molecule binds across the dimer.</text>
</comment>
<comment type="subcellular location">
    <subcellularLocation>
        <location evidence="1">Cytoplasm</location>
    </subcellularLocation>
</comment>
<comment type="domain">
    <text evidence="1">Consists of two distinct domains, a catalytic core and a N-terminal extension that is involved in tRNA binding.</text>
</comment>
<comment type="similarity">
    <text evidence="1">Belongs to the class-II aminoacyl-tRNA synthetase family. Type-1 seryl-tRNA synthetase subfamily.</text>
</comment>
<gene>
    <name evidence="1" type="primary">serS</name>
    <name type="ordered locus">Bmul_2419</name>
    <name type="ordered locus">BMULJ_00814</name>
</gene>
<protein>
    <recommendedName>
        <fullName evidence="1">Serine--tRNA ligase</fullName>
        <ecNumber evidence="1">6.1.1.11</ecNumber>
    </recommendedName>
    <alternativeName>
        <fullName evidence="1">Seryl-tRNA synthetase</fullName>
        <shortName evidence="1">SerRS</shortName>
    </alternativeName>
    <alternativeName>
        <fullName evidence="1">Seryl-tRNA(Ser/Sec) synthetase</fullName>
    </alternativeName>
</protein>
<keyword id="KW-0030">Aminoacyl-tRNA synthetase</keyword>
<keyword id="KW-0067">ATP-binding</keyword>
<keyword id="KW-0963">Cytoplasm</keyword>
<keyword id="KW-0436">Ligase</keyword>
<keyword id="KW-0547">Nucleotide-binding</keyword>
<keyword id="KW-0648">Protein biosynthesis</keyword>
<keyword id="KW-1185">Reference proteome</keyword>
<reference key="1">
    <citation type="submission" date="2007-10" db="EMBL/GenBank/DDBJ databases">
        <title>Complete sequence of chromosome 1 of Burkholderia multivorans ATCC 17616.</title>
        <authorList>
            <person name="Copeland A."/>
            <person name="Lucas S."/>
            <person name="Lapidus A."/>
            <person name="Barry K."/>
            <person name="Glavina del Rio T."/>
            <person name="Dalin E."/>
            <person name="Tice H."/>
            <person name="Pitluck S."/>
            <person name="Chain P."/>
            <person name="Malfatti S."/>
            <person name="Shin M."/>
            <person name="Vergez L."/>
            <person name="Schmutz J."/>
            <person name="Larimer F."/>
            <person name="Land M."/>
            <person name="Hauser L."/>
            <person name="Kyrpides N."/>
            <person name="Kim E."/>
            <person name="Tiedje J."/>
            <person name="Richardson P."/>
        </authorList>
    </citation>
    <scope>NUCLEOTIDE SEQUENCE [LARGE SCALE GENOMIC DNA]</scope>
    <source>
        <strain>ATCC 17616 / 249</strain>
    </source>
</reference>
<reference key="2">
    <citation type="submission" date="2007-04" db="EMBL/GenBank/DDBJ databases">
        <title>Complete genome sequence of Burkholderia multivorans ATCC 17616.</title>
        <authorList>
            <person name="Ohtsubo Y."/>
            <person name="Yamashita A."/>
            <person name="Kurokawa K."/>
            <person name="Takami H."/>
            <person name="Yuhara S."/>
            <person name="Nishiyama E."/>
            <person name="Endo R."/>
            <person name="Miyazaki R."/>
            <person name="Ono A."/>
            <person name="Yano K."/>
            <person name="Ito M."/>
            <person name="Sota M."/>
            <person name="Yuji N."/>
            <person name="Hattori M."/>
            <person name="Tsuda M."/>
        </authorList>
    </citation>
    <scope>NUCLEOTIDE SEQUENCE [LARGE SCALE GENOMIC DNA]</scope>
    <source>
        <strain>ATCC 17616 / 249</strain>
    </source>
</reference>
<evidence type="ECO:0000255" key="1">
    <source>
        <dbReference type="HAMAP-Rule" id="MF_00176"/>
    </source>
</evidence>
<feature type="chain" id="PRO_1000098041" description="Serine--tRNA ligase">
    <location>
        <begin position="1"/>
        <end position="433"/>
    </location>
</feature>
<feature type="binding site" evidence="1">
    <location>
        <begin position="235"/>
        <end position="237"/>
    </location>
    <ligand>
        <name>L-serine</name>
        <dbReference type="ChEBI" id="CHEBI:33384"/>
    </ligand>
</feature>
<feature type="binding site" evidence="1">
    <location>
        <begin position="266"/>
        <end position="268"/>
    </location>
    <ligand>
        <name>ATP</name>
        <dbReference type="ChEBI" id="CHEBI:30616"/>
    </ligand>
</feature>
<feature type="binding site" evidence="1">
    <location>
        <position position="289"/>
    </location>
    <ligand>
        <name>L-serine</name>
        <dbReference type="ChEBI" id="CHEBI:33384"/>
    </ligand>
</feature>
<feature type="binding site" evidence="1">
    <location>
        <begin position="353"/>
        <end position="356"/>
    </location>
    <ligand>
        <name>ATP</name>
        <dbReference type="ChEBI" id="CHEBI:30616"/>
    </ligand>
</feature>
<feature type="binding site" evidence="1">
    <location>
        <position position="388"/>
    </location>
    <ligand>
        <name>L-serine</name>
        <dbReference type="ChEBI" id="CHEBI:33384"/>
    </ligand>
</feature>
<sequence length="433" mass="47538">MLDIQLLRKDLDGVAKRLADRGYTLDVAAFSALEAERRAIQTRTEELQARRNTLSKQIGAMKAKGEDTSAVMAEVGGIGDEMKASAAKLDEIQARLSELLLGMPNLAHESVPVGKDEADNVEVRRWGTPRQFDFDVKDHVDIGTPLGLDFETGAKLAGARFTMLRGPIARLHRALAQFMLDTHTQQHGYSETYTPYIVNPEILYGTGQLPKFADDMFRVEKGGAENTVTQYLISTSEISLTNTVRESIVEASALPIKLTAHSPCFRSEAGSYGRDTRGMIRQHQFDKVEMVQIVAPESSYAALDEMVGHAEAILQKLGLPYRVVALCTGDMGFSAAKTFDLEVWLPAQNTYREISSCSNTEAFQARRMQARFRNAQGKPELVHTLNGSGLAVGRTLVAVLENYQNADGSVTVPEVLRPYMGGLERIDAPAQAS</sequence>
<proteinExistence type="inferred from homology"/>
<name>SYS_BURM1</name>
<accession>A9AES3</accession>